<name>HCAD_ECO7I</name>
<keyword id="KW-0058">Aromatic hydrocarbons catabolism</keyword>
<keyword id="KW-0274">FAD</keyword>
<keyword id="KW-0285">Flavoprotein</keyword>
<keyword id="KW-0520">NAD</keyword>
<keyword id="KW-0560">Oxidoreductase</keyword>
<proteinExistence type="inferred from homology"/>
<sequence>MKEKTIIIVGGGQAAAMAAASLRQQGFTGELHLFSDEQHLPYERPPLSKSMLLEDSPQLQSVLPAHWWQENNVHLHSGVTIKTLGRDTRELVLTNGESWHWDQLFIATGAAARPLPLLDALGERCFTLRHAGDAARLREVLQPERSVVIVGAGTIGLELAASATQRGCKATVIELAATVMGRNAPPPVQRYLLQRHQQAGVRILLNNAIEHVVDGENVELTLQSGETLRADVVIYGIGISANDQLAREANLDTANGIVIDEACRTCDPAIFAGGDVAITRLDNGALHRCESWENANNQAQIAASAMLGLPLPRLPPPWFWSDQYSDNLQFIGDMRGDDWLCRGNPETQKAIWFNLQNGVLIGAVTLNQGREIRLIRKWIQSGKTFDAKLLTDEHIALKSL</sequence>
<dbReference type="EC" id="1.18.1.3" evidence="1"/>
<dbReference type="EMBL" id="CU928164">
    <property type="protein sequence ID" value="CAR18865.1"/>
    <property type="molecule type" value="Genomic_DNA"/>
</dbReference>
<dbReference type="RefSeq" id="WP_000660770.1">
    <property type="nucleotide sequence ID" value="NC_011750.1"/>
</dbReference>
<dbReference type="RefSeq" id="YP_002408681.1">
    <property type="nucleotide sequence ID" value="NC_011750.1"/>
</dbReference>
<dbReference type="SMR" id="B7NRJ1"/>
<dbReference type="STRING" id="585057.ECIAI39_2743"/>
<dbReference type="KEGG" id="ect:ECIAI39_2743"/>
<dbReference type="PATRIC" id="fig|585057.6.peg.2852"/>
<dbReference type="HOGENOM" id="CLU_003291_4_0_6"/>
<dbReference type="UniPathway" id="UPA00714"/>
<dbReference type="Proteomes" id="UP000000749">
    <property type="component" value="Chromosome"/>
</dbReference>
<dbReference type="GO" id="GO:0005737">
    <property type="term" value="C:cytoplasm"/>
    <property type="evidence" value="ECO:0007669"/>
    <property type="project" value="TreeGrafter"/>
</dbReference>
<dbReference type="GO" id="GO:0008695">
    <property type="term" value="F:3-phenylpropionate dioxygenase activity"/>
    <property type="evidence" value="ECO:0007669"/>
    <property type="project" value="UniProtKB-UniRule"/>
</dbReference>
<dbReference type="GO" id="GO:0008860">
    <property type="term" value="F:ferredoxin-NAD+ reductase activity"/>
    <property type="evidence" value="ECO:0007669"/>
    <property type="project" value="UniProtKB-EC"/>
</dbReference>
<dbReference type="GO" id="GO:0016651">
    <property type="term" value="F:oxidoreductase activity, acting on NAD(P)H"/>
    <property type="evidence" value="ECO:0007669"/>
    <property type="project" value="TreeGrafter"/>
</dbReference>
<dbReference type="GO" id="GO:0019380">
    <property type="term" value="P:3-phenylpropionate catabolic process"/>
    <property type="evidence" value="ECO:0007669"/>
    <property type="project" value="UniProtKB-UniRule"/>
</dbReference>
<dbReference type="FunFam" id="3.30.390.30:FF:000010">
    <property type="entry name" value="3-phenylpropionate/cinnamic acid dioxygenase ferredoxin--NAD(+) reductase component"/>
    <property type="match status" value="1"/>
</dbReference>
<dbReference type="FunFam" id="3.50.50.60:FF:000088">
    <property type="entry name" value="3-phenylpropionate/cinnamic acid dioxygenase ferredoxin--NAD(+) reductase component"/>
    <property type="match status" value="1"/>
</dbReference>
<dbReference type="Gene3D" id="3.30.390.30">
    <property type="match status" value="1"/>
</dbReference>
<dbReference type="Gene3D" id="3.50.50.60">
    <property type="entry name" value="FAD/NAD(P)-binding domain"/>
    <property type="match status" value="2"/>
</dbReference>
<dbReference type="HAMAP" id="MF_01651">
    <property type="entry name" value="HcaD"/>
    <property type="match status" value="1"/>
</dbReference>
<dbReference type="InterPro" id="IPR050446">
    <property type="entry name" value="FAD-oxidoreductase/Apoptosis"/>
</dbReference>
<dbReference type="InterPro" id="IPR036188">
    <property type="entry name" value="FAD/NAD-bd_sf"/>
</dbReference>
<dbReference type="InterPro" id="IPR023753">
    <property type="entry name" value="FAD/NAD-binding_dom"/>
</dbReference>
<dbReference type="InterPro" id="IPR016156">
    <property type="entry name" value="FAD/NAD-linked_Rdtase_dimer_sf"/>
</dbReference>
<dbReference type="InterPro" id="IPR023744">
    <property type="entry name" value="HcaD"/>
</dbReference>
<dbReference type="InterPro" id="IPR028202">
    <property type="entry name" value="Reductase_C"/>
</dbReference>
<dbReference type="InterPro" id="IPR053382">
    <property type="entry name" value="Ring-hydroxylating_dioxygenase"/>
</dbReference>
<dbReference type="NCBIfam" id="NF042949">
    <property type="entry name" value="3PPDioc_HcaD"/>
    <property type="match status" value="1"/>
</dbReference>
<dbReference type="NCBIfam" id="NF007286">
    <property type="entry name" value="PRK09754.1"/>
    <property type="match status" value="1"/>
</dbReference>
<dbReference type="PANTHER" id="PTHR43557">
    <property type="entry name" value="APOPTOSIS-INDUCING FACTOR 1"/>
    <property type="match status" value="1"/>
</dbReference>
<dbReference type="PANTHER" id="PTHR43557:SF2">
    <property type="entry name" value="RIESKE DOMAIN-CONTAINING PROTEIN-RELATED"/>
    <property type="match status" value="1"/>
</dbReference>
<dbReference type="Pfam" id="PF07992">
    <property type="entry name" value="Pyr_redox_2"/>
    <property type="match status" value="1"/>
</dbReference>
<dbReference type="Pfam" id="PF14759">
    <property type="entry name" value="Reductase_C"/>
    <property type="match status" value="1"/>
</dbReference>
<dbReference type="PRINTS" id="PR00368">
    <property type="entry name" value="FADPNR"/>
</dbReference>
<dbReference type="PRINTS" id="PR00411">
    <property type="entry name" value="PNDRDTASEI"/>
</dbReference>
<dbReference type="SUPFAM" id="SSF51905">
    <property type="entry name" value="FAD/NAD(P)-binding domain"/>
    <property type="match status" value="1"/>
</dbReference>
<dbReference type="SUPFAM" id="SSF55424">
    <property type="entry name" value="FAD/NAD-linked reductases, dimerisation (C-terminal) domain"/>
    <property type="match status" value="1"/>
</dbReference>
<reference key="1">
    <citation type="journal article" date="2009" name="PLoS Genet.">
        <title>Organised genome dynamics in the Escherichia coli species results in highly diverse adaptive paths.</title>
        <authorList>
            <person name="Touchon M."/>
            <person name="Hoede C."/>
            <person name="Tenaillon O."/>
            <person name="Barbe V."/>
            <person name="Baeriswyl S."/>
            <person name="Bidet P."/>
            <person name="Bingen E."/>
            <person name="Bonacorsi S."/>
            <person name="Bouchier C."/>
            <person name="Bouvet O."/>
            <person name="Calteau A."/>
            <person name="Chiapello H."/>
            <person name="Clermont O."/>
            <person name="Cruveiller S."/>
            <person name="Danchin A."/>
            <person name="Diard M."/>
            <person name="Dossat C."/>
            <person name="Karoui M.E."/>
            <person name="Frapy E."/>
            <person name="Garry L."/>
            <person name="Ghigo J.M."/>
            <person name="Gilles A.M."/>
            <person name="Johnson J."/>
            <person name="Le Bouguenec C."/>
            <person name="Lescat M."/>
            <person name="Mangenot S."/>
            <person name="Martinez-Jehanne V."/>
            <person name="Matic I."/>
            <person name="Nassif X."/>
            <person name="Oztas S."/>
            <person name="Petit M.A."/>
            <person name="Pichon C."/>
            <person name="Rouy Z."/>
            <person name="Ruf C.S."/>
            <person name="Schneider D."/>
            <person name="Tourret J."/>
            <person name="Vacherie B."/>
            <person name="Vallenet D."/>
            <person name="Medigue C."/>
            <person name="Rocha E.P.C."/>
            <person name="Denamur E."/>
        </authorList>
    </citation>
    <scope>NUCLEOTIDE SEQUENCE [LARGE SCALE GENOMIC DNA]</scope>
    <source>
        <strain>IAI39 / ExPEC</strain>
    </source>
</reference>
<organism>
    <name type="scientific">Escherichia coli O7:K1 (strain IAI39 / ExPEC)</name>
    <dbReference type="NCBI Taxonomy" id="585057"/>
    <lineage>
        <taxon>Bacteria</taxon>
        <taxon>Pseudomonadati</taxon>
        <taxon>Pseudomonadota</taxon>
        <taxon>Gammaproteobacteria</taxon>
        <taxon>Enterobacterales</taxon>
        <taxon>Enterobacteriaceae</taxon>
        <taxon>Escherichia</taxon>
    </lineage>
</organism>
<feature type="chain" id="PRO_1000186983" description="3-phenylpropionate/cinnamic acid dioxygenase ferredoxin--NAD(+) reductase component">
    <location>
        <begin position="1"/>
        <end position="400"/>
    </location>
</feature>
<feature type="binding site" evidence="1">
    <location>
        <begin position="5"/>
        <end position="36"/>
    </location>
    <ligand>
        <name>FAD</name>
        <dbReference type="ChEBI" id="CHEBI:57692"/>
    </ligand>
</feature>
<feature type="binding site" evidence="1">
    <location>
        <begin position="146"/>
        <end position="174"/>
    </location>
    <ligand>
        <name>NAD(+)</name>
        <dbReference type="ChEBI" id="CHEBI:57540"/>
    </ligand>
</feature>
<evidence type="ECO:0000255" key="1">
    <source>
        <dbReference type="HAMAP-Rule" id="MF_01651"/>
    </source>
</evidence>
<accession>B7NRJ1</accession>
<gene>
    <name evidence="1" type="primary">hcaD</name>
    <name type="ordered locus">ECIAI39_2743</name>
</gene>
<comment type="function">
    <text evidence="1">Part of the multicomponent 3-phenylpropionate dioxygenase, that converts 3-phenylpropionic acid (PP) and cinnamic acid (CI) into 3-phenylpropionate-dihydrodiol (PP-dihydrodiol) and cinnamic acid-dihydrodiol (CI-dihydrodiol), respectively.</text>
</comment>
<comment type="catalytic activity">
    <reaction evidence="1">
        <text>2 reduced [2Fe-2S]-[ferredoxin] + NAD(+) + H(+) = 2 oxidized [2Fe-2S]-[ferredoxin] + NADH</text>
        <dbReference type="Rhea" id="RHEA:16521"/>
        <dbReference type="Rhea" id="RHEA-COMP:10000"/>
        <dbReference type="Rhea" id="RHEA-COMP:10001"/>
        <dbReference type="ChEBI" id="CHEBI:15378"/>
        <dbReference type="ChEBI" id="CHEBI:33737"/>
        <dbReference type="ChEBI" id="CHEBI:33738"/>
        <dbReference type="ChEBI" id="CHEBI:57540"/>
        <dbReference type="ChEBI" id="CHEBI:57945"/>
        <dbReference type="EC" id="1.18.1.3"/>
    </reaction>
</comment>
<comment type="cofactor">
    <cofactor evidence="1">
        <name>FAD</name>
        <dbReference type="ChEBI" id="CHEBI:57692"/>
    </cofactor>
</comment>
<comment type="pathway">
    <text evidence="1">Aromatic compound metabolism; 3-phenylpropanoate degradation.</text>
</comment>
<comment type="subunit">
    <text evidence="1">This dioxygenase system consists of four proteins: the two subunits of the hydroxylase component (HcaE and HcaF), a ferredoxin (HcaC) and a ferredoxin reductase (HcaD).</text>
</comment>
<comment type="similarity">
    <text evidence="1">Belongs to the bacterial ring-hydroxylating dioxygenase ferredoxin reductase family.</text>
</comment>
<protein>
    <recommendedName>
        <fullName evidence="1">3-phenylpropionate/cinnamic acid dioxygenase ferredoxin--NAD(+) reductase component</fullName>
        <ecNumber evidence="1">1.18.1.3</ecNumber>
    </recommendedName>
</protein>